<organism>
    <name type="scientific">Debaryomyces hansenii (strain ATCC 36239 / CBS 767 / BCRC 21394 / JCM 1990 / NBRC 0083 / IGC 2968)</name>
    <name type="common">Yeast</name>
    <name type="synonym">Torulaspora hansenii</name>
    <dbReference type="NCBI Taxonomy" id="284592"/>
    <lineage>
        <taxon>Eukaryota</taxon>
        <taxon>Fungi</taxon>
        <taxon>Dikarya</taxon>
        <taxon>Ascomycota</taxon>
        <taxon>Saccharomycotina</taxon>
        <taxon>Pichiomycetes</taxon>
        <taxon>Debaryomycetaceae</taxon>
        <taxon>Debaryomyces</taxon>
    </lineage>
</organism>
<feature type="chain" id="PRO_0000226098" description="Serine/threonine-protein phosphatase 2A activator 1">
    <location>
        <begin position="1"/>
        <end position="441"/>
    </location>
</feature>
<feature type="region of interest" description="Disordered" evidence="2">
    <location>
        <begin position="66"/>
        <end position="100"/>
    </location>
</feature>
<feature type="region of interest" description="Disordered" evidence="2">
    <location>
        <begin position="421"/>
        <end position="441"/>
    </location>
</feature>
<feature type="compositionally biased region" description="Polar residues" evidence="2">
    <location>
        <begin position="66"/>
        <end position="75"/>
    </location>
</feature>
<feature type="compositionally biased region" description="Polar residues" evidence="2">
    <location>
        <begin position="421"/>
        <end position="432"/>
    </location>
</feature>
<reference key="1">
    <citation type="journal article" date="2004" name="Nature">
        <title>Genome evolution in yeasts.</title>
        <authorList>
            <person name="Dujon B."/>
            <person name="Sherman D."/>
            <person name="Fischer G."/>
            <person name="Durrens P."/>
            <person name="Casaregola S."/>
            <person name="Lafontaine I."/>
            <person name="de Montigny J."/>
            <person name="Marck C."/>
            <person name="Neuveglise C."/>
            <person name="Talla E."/>
            <person name="Goffard N."/>
            <person name="Frangeul L."/>
            <person name="Aigle M."/>
            <person name="Anthouard V."/>
            <person name="Babour A."/>
            <person name="Barbe V."/>
            <person name="Barnay S."/>
            <person name="Blanchin S."/>
            <person name="Beckerich J.-M."/>
            <person name="Beyne E."/>
            <person name="Bleykasten C."/>
            <person name="Boisrame A."/>
            <person name="Boyer J."/>
            <person name="Cattolico L."/>
            <person name="Confanioleri F."/>
            <person name="de Daruvar A."/>
            <person name="Despons L."/>
            <person name="Fabre E."/>
            <person name="Fairhead C."/>
            <person name="Ferry-Dumazet H."/>
            <person name="Groppi A."/>
            <person name="Hantraye F."/>
            <person name="Hennequin C."/>
            <person name="Jauniaux N."/>
            <person name="Joyet P."/>
            <person name="Kachouri R."/>
            <person name="Kerrest A."/>
            <person name="Koszul R."/>
            <person name="Lemaire M."/>
            <person name="Lesur I."/>
            <person name="Ma L."/>
            <person name="Muller H."/>
            <person name="Nicaud J.-M."/>
            <person name="Nikolski M."/>
            <person name="Oztas S."/>
            <person name="Ozier-Kalogeropoulos O."/>
            <person name="Pellenz S."/>
            <person name="Potier S."/>
            <person name="Richard G.-F."/>
            <person name="Straub M.-L."/>
            <person name="Suleau A."/>
            <person name="Swennen D."/>
            <person name="Tekaia F."/>
            <person name="Wesolowski-Louvel M."/>
            <person name="Westhof E."/>
            <person name="Wirth B."/>
            <person name="Zeniou-Meyer M."/>
            <person name="Zivanovic Y."/>
            <person name="Bolotin-Fukuhara M."/>
            <person name="Thierry A."/>
            <person name="Bouchier C."/>
            <person name="Caudron B."/>
            <person name="Scarpelli C."/>
            <person name="Gaillardin C."/>
            <person name="Weissenbach J."/>
            <person name="Wincker P."/>
            <person name="Souciet J.-L."/>
        </authorList>
    </citation>
    <scope>NUCLEOTIDE SEQUENCE [LARGE SCALE GENOMIC DNA]</scope>
    <source>
        <strain>ATCC 36239 / CBS 767 / BCRC 21394 / JCM 1990 / NBRC 0083 / IGC 2968</strain>
    </source>
</reference>
<evidence type="ECO:0000250" key="1"/>
<evidence type="ECO:0000256" key="2">
    <source>
        <dbReference type="SAM" id="MobiDB-lite"/>
    </source>
</evidence>
<evidence type="ECO:0000305" key="3"/>
<keyword id="KW-0963">Cytoplasm</keyword>
<keyword id="KW-0413">Isomerase</keyword>
<keyword id="KW-0539">Nucleus</keyword>
<keyword id="KW-1185">Reference proteome</keyword>
<keyword id="KW-0697">Rotamase</keyword>
<proteinExistence type="inferred from homology"/>
<protein>
    <recommendedName>
        <fullName>Serine/threonine-protein phosphatase 2A activator 1</fullName>
        <ecNumber>5.2.1.8</ecNumber>
    </recommendedName>
    <alternativeName>
        <fullName>Peptidyl-prolyl cis-trans isomerase PTPA-1</fullName>
        <shortName>PPIase PTPA-1</shortName>
        <shortName>Rotamase PTPA-1</shortName>
    </alternativeName>
    <alternativeName>
        <fullName>Phosphotyrosyl phosphatase activator 1</fullName>
    </alternativeName>
</protein>
<name>PTPA1_DEBHA</name>
<sequence>MSNTHNIHWSTPSKRIYDASDIPNFKRSIAYYKIRHTLSVVIEKVKGCDLPPGILDKSIVTRKINNIPPSNTTHSRPLDLPPPQGEEEGDKCNISHSSNQTIRGEANESNYEGLLRILEVLNRYIDETPPLKGPRRFGNLACRDWHEKMNTKMNDLLKDNIKIHNSSFNSEFDGFIKELKYYIENSFGSAIRLDYGTGHELSFLAFIGGLIDFKLLSLEELTGSDILTIFAKYYDLTRRLILVYSLEPAGSHGVWGLDDHYHLIYIFGAAQFNGDQDKIIPPVQQILTRPVLDRYKETNLYVNAISFIHKIKSGPFNEHSPIIFDIHSSVSLWSKVLSGLLKMFEVEVLGKFPVVQHFWFGSSLYPWRDFETNKELPIYKRDEDEMDEDSSGDFLNGNTGIKTTKHNISMTGAPWNLNATQRQDDLNSTTYRGRQPRLGRN</sequence>
<dbReference type="EC" id="5.2.1.8"/>
<dbReference type="EMBL" id="CR382137">
    <property type="protein sequence ID" value="CAG88373.2"/>
    <property type="molecule type" value="Genomic_DNA"/>
</dbReference>
<dbReference type="RefSeq" id="XP_460106.2">
    <property type="nucleotide sequence ID" value="XM_460106.1"/>
</dbReference>
<dbReference type="SMR" id="Q6BNW4"/>
<dbReference type="FunCoup" id="Q6BNW4">
    <property type="interactions" value="120"/>
</dbReference>
<dbReference type="STRING" id="284592.Q6BNW4"/>
<dbReference type="GeneID" id="2902052"/>
<dbReference type="KEGG" id="dha:DEHA2E18502g"/>
<dbReference type="VEuPathDB" id="FungiDB:DEHA2E18502g"/>
<dbReference type="eggNOG" id="KOG2867">
    <property type="taxonomic scope" value="Eukaryota"/>
</dbReference>
<dbReference type="HOGENOM" id="CLU_030733_2_1_1"/>
<dbReference type="InParanoid" id="Q6BNW4"/>
<dbReference type="OMA" id="ACRDWHA"/>
<dbReference type="OrthoDB" id="16120at2759"/>
<dbReference type="Proteomes" id="UP000000599">
    <property type="component" value="Chromosome E"/>
</dbReference>
<dbReference type="GO" id="GO:0000785">
    <property type="term" value="C:chromatin"/>
    <property type="evidence" value="ECO:0007669"/>
    <property type="project" value="EnsemblFungi"/>
</dbReference>
<dbReference type="GO" id="GO:0005737">
    <property type="term" value="C:cytoplasm"/>
    <property type="evidence" value="ECO:0007669"/>
    <property type="project" value="UniProtKB-SubCell"/>
</dbReference>
<dbReference type="GO" id="GO:0005634">
    <property type="term" value="C:nucleus"/>
    <property type="evidence" value="ECO:0007669"/>
    <property type="project" value="UniProtKB-SubCell"/>
</dbReference>
<dbReference type="GO" id="GO:0000159">
    <property type="term" value="C:protein phosphatase type 2A complex"/>
    <property type="evidence" value="ECO:0007669"/>
    <property type="project" value="EnsemblFungi"/>
</dbReference>
<dbReference type="GO" id="GO:0003755">
    <property type="term" value="F:peptidyl-prolyl cis-trans isomerase activity"/>
    <property type="evidence" value="ECO:0007669"/>
    <property type="project" value="UniProtKB-KW"/>
</dbReference>
<dbReference type="GO" id="GO:0008160">
    <property type="term" value="F:protein tyrosine phosphatase activator activity"/>
    <property type="evidence" value="ECO:0007669"/>
    <property type="project" value="TreeGrafter"/>
</dbReference>
<dbReference type="GO" id="GO:0006914">
    <property type="term" value="P:autophagy"/>
    <property type="evidence" value="ECO:0007669"/>
    <property type="project" value="EnsemblFungi"/>
</dbReference>
<dbReference type="GO" id="GO:0006281">
    <property type="term" value="P:DNA repair"/>
    <property type="evidence" value="ECO:0007669"/>
    <property type="project" value="EnsemblFungi"/>
</dbReference>
<dbReference type="GO" id="GO:0000082">
    <property type="term" value="P:G1/S transition of mitotic cell cycle"/>
    <property type="evidence" value="ECO:0007669"/>
    <property type="project" value="EnsemblFungi"/>
</dbReference>
<dbReference type="GO" id="GO:0007052">
    <property type="term" value="P:mitotic spindle organization"/>
    <property type="evidence" value="ECO:0007669"/>
    <property type="project" value="EnsemblFungi"/>
</dbReference>
<dbReference type="GO" id="GO:0006357">
    <property type="term" value="P:regulation of transcription by RNA polymerase II"/>
    <property type="evidence" value="ECO:0007669"/>
    <property type="project" value="EnsemblFungi"/>
</dbReference>
<dbReference type="CDD" id="cd04087">
    <property type="entry name" value="PTPA"/>
    <property type="match status" value="1"/>
</dbReference>
<dbReference type="Gene3D" id="1.20.120.1150">
    <property type="match status" value="1"/>
</dbReference>
<dbReference type="InterPro" id="IPR004327">
    <property type="entry name" value="Phstyr_phstse_ac"/>
</dbReference>
<dbReference type="InterPro" id="IPR043170">
    <property type="entry name" value="PTPA_C_lid"/>
</dbReference>
<dbReference type="InterPro" id="IPR037218">
    <property type="entry name" value="PTPA_sf"/>
</dbReference>
<dbReference type="PANTHER" id="PTHR10012">
    <property type="entry name" value="SERINE/THREONINE-PROTEIN PHOSPHATASE 2A REGULATORY SUBUNIT B"/>
    <property type="match status" value="1"/>
</dbReference>
<dbReference type="PANTHER" id="PTHR10012:SF3">
    <property type="entry name" value="SERINE_THREONINE-PROTEIN PHOSPHATASE 2A ACTIVATOR 1"/>
    <property type="match status" value="1"/>
</dbReference>
<dbReference type="Pfam" id="PF03095">
    <property type="entry name" value="PTPA"/>
    <property type="match status" value="1"/>
</dbReference>
<dbReference type="PIRSF" id="PIRSF016325">
    <property type="entry name" value="Phstyr_phstse_ac"/>
    <property type="match status" value="1"/>
</dbReference>
<dbReference type="SUPFAM" id="SSF140984">
    <property type="entry name" value="PTPA-like"/>
    <property type="match status" value="1"/>
</dbReference>
<comment type="function">
    <text evidence="1">PPIases accelerate the folding of proteins. It catalyzes the cis-trans isomerization of proline imidic peptide bonds in oligopeptides. Acts as a regulatory subunit for PP2A-like phosphatases modulating their activity or substrate specificity, probably by inducing a conformational change in the catalytic subunit, a direct target of the PPIase. Can reactivate inactive phosphatase PP2A-phosphatase methylesterase complexes (PP2Ai) in presence of ATP and Mg(2+) by dissociating the inactive form from the complex (By similarity).</text>
</comment>
<comment type="catalytic activity">
    <reaction>
        <text>[protein]-peptidylproline (omega=180) = [protein]-peptidylproline (omega=0)</text>
        <dbReference type="Rhea" id="RHEA:16237"/>
        <dbReference type="Rhea" id="RHEA-COMP:10747"/>
        <dbReference type="Rhea" id="RHEA-COMP:10748"/>
        <dbReference type="ChEBI" id="CHEBI:83833"/>
        <dbReference type="ChEBI" id="CHEBI:83834"/>
        <dbReference type="EC" id="5.2.1.8"/>
    </reaction>
</comment>
<comment type="subcellular location">
    <subcellularLocation>
        <location evidence="1">Cytoplasm</location>
    </subcellularLocation>
    <subcellularLocation>
        <location evidence="1">Nucleus</location>
    </subcellularLocation>
</comment>
<comment type="similarity">
    <text evidence="3">Belongs to the PTPA-type PPIase family.</text>
</comment>
<accession>Q6BNW4</accession>
<gene>
    <name type="primary">RRD1</name>
    <name type="ordered locus">DEHA2E18502g</name>
</gene>